<dbReference type="EC" id="5.3.3.2" evidence="1"/>
<dbReference type="EMBL" id="CP000544">
    <property type="protein sequence ID" value="ABM62387.1"/>
    <property type="molecule type" value="Genomic_DNA"/>
</dbReference>
<dbReference type="RefSeq" id="WP_011814409.1">
    <property type="nucleotide sequence ID" value="NC_008789.1"/>
</dbReference>
<dbReference type="SMR" id="A1WXH5"/>
<dbReference type="STRING" id="349124.Hhal_1623"/>
<dbReference type="KEGG" id="hha:Hhal_1623"/>
<dbReference type="eggNOG" id="COG1443">
    <property type="taxonomic scope" value="Bacteria"/>
</dbReference>
<dbReference type="HOGENOM" id="CLU_060552_2_1_6"/>
<dbReference type="UniPathway" id="UPA00059">
    <property type="reaction ID" value="UER00104"/>
</dbReference>
<dbReference type="Proteomes" id="UP000000647">
    <property type="component" value="Chromosome"/>
</dbReference>
<dbReference type="GO" id="GO:0005737">
    <property type="term" value="C:cytoplasm"/>
    <property type="evidence" value="ECO:0007669"/>
    <property type="project" value="UniProtKB-SubCell"/>
</dbReference>
<dbReference type="GO" id="GO:0004452">
    <property type="term" value="F:isopentenyl-diphosphate delta-isomerase activity"/>
    <property type="evidence" value="ECO:0007669"/>
    <property type="project" value="UniProtKB-UniRule"/>
</dbReference>
<dbReference type="GO" id="GO:0046872">
    <property type="term" value="F:metal ion binding"/>
    <property type="evidence" value="ECO:0007669"/>
    <property type="project" value="UniProtKB-KW"/>
</dbReference>
<dbReference type="GO" id="GO:0050992">
    <property type="term" value="P:dimethylallyl diphosphate biosynthetic process"/>
    <property type="evidence" value="ECO:0007669"/>
    <property type="project" value="UniProtKB-UniRule"/>
</dbReference>
<dbReference type="GO" id="GO:0009240">
    <property type="term" value="P:isopentenyl diphosphate biosynthetic process"/>
    <property type="evidence" value="ECO:0007669"/>
    <property type="project" value="TreeGrafter"/>
</dbReference>
<dbReference type="CDD" id="cd02885">
    <property type="entry name" value="NUDIX_IPP_Isomerase"/>
    <property type="match status" value="1"/>
</dbReference>
<dbReference type="Gene3D" id="3.90.79.10">
    <property type="entry name" value="Nucleoside Triphosphate Pyrophosphohydrolase"/>
    <property type="match status" value="1"/>
</dbReference>
<dbReference type="HAMAP" id="MF_00202">
    <property type="entry name" value="Idi"/>
    <property type="match status" value="1"/>
</dbReference>
<dbReference type="InterPro" id="IPR056375">
    <property type="entry name" value="Idi_bact"/>
</dbReference>
<dbReference type="InterPro" id="IPR011876">
    <property type="entry name" value="IsopentenylPP_isomerase_typ1"/>
</dbReference>
<dbReference type="InterPro" id="IPR015797">
    <property type="entry name" value="NUDIX_hydrolase-like_dom_sf"/>
</dbReference>
<dbReference type="InterPro" id="IPR000086">
    <property type="entry name" value="NUDIX_hydrolase_dom"/>
</dbReference>
<dbReference type="NCBIfam" id="TIGR02150">
    <property type="entry name" value="IPP_isom_1"/>
    <property type="match status" value="1"/>
</dbReference>
<dbReference type="NCBIfam" id="NF002995">
    <property type="entry name" value="PRK03759.1"/>
    <property type="match status" value="1"/>
</dbReference>
<dbReference type="PANTHER" id="PTHR10885">
    <property type="entry name" value="ISOPENTENYL-DIPHOSPHATE DELTA-ISOMERASE"/>
    <property type="match status" value="1"/>
</dbReference>
<dbReference type="PANTHER" id="PTHR10885:SF0">
    <property type="entry name" value="ISOPENTENYL-DIPHOSPHATE DELTA-ISOMERASE"/>
    <property type="match status" value="1"/>
</dbReference>
<dbReference type="Pfam" id="PF00293">
    <property type="entry name" value="NUDIX"/>
    <property type="match status" value="1"/>
</dbReference>
<dbReference type="PIRSF" id="PIRSF018427">
    <property type="entry name" value="Isopntndiph_ism"/>
    <property type="match status" value="1"/>
</dbReference>
<dbReference type="SUPFAM" id="SSF55811">
    <property type="entry name" value="Nudix"/>
    <property type="match status" value="1"/>
</dbReference>
<dbReference type="PROSITE" id="PS51462">
    <property type="entry name" value="NUDIX"/>
    <property type="match status" value="1"/>
</dbReference>
<proteinExistence type="inferred from homology"/>
<gene>
    <name evidence="1" type="primary">idi</name>
    <name type="ordered locus">Hhal_1623</name>
</gene>
<name>IDI_HALHL</name>
<organism>
    <name type="scientific">Halorhodospira halophila (strain DSM 244 / SL1)</name>
    <name type="common">Ectothiorhodospira halophila (strain DSM 244 / SL1)</name>
    <dbReference type="NCBI Taxonomy" id="349124"/>
    <lineage>
        <taxon>Bacteria</taxon>
        <taxon>Pseudomonadati</taxon>
        <taxon>Pseudomonadota</taxon>
        <taxon>Gammaproteobacteria</taxon>
        <taxon>Chromatiales</taxon>
        <taxon>Ectothiorhodospiraceae</taxon>
        <taxon>Halorhodospira</taxon>
    </lineage>
</organism>
<evidence type="ECO:0000255" key="1">
    <source>
        <dbReference type="HAMAP-Rule" id="MF_00202"/>
    </source>
</evidence>
<sequence length="175" mass="19853">MEHVVIVDPEGQRVGTEEKIRAHADGGTLHLAFCVFVFNPRGELLLQRRADSKYHFSGLWSNTCCGHPRPGEGVTEAAERRLGEEFGFVTRLHPVAQFTYHAEDHHTGLAEYEYAHVLIGRAPTDQPAPDPLEIGAWEWAAPLRIQADTQQYPLRYTPWFRRLIQEQPVADWATG</sequence>
<protein>
    <recommendedName>
        <fullName evidence="1">Isopentenyl-diphosphate Delta-isomerase</fullName>
        <shortName evidence="1">IPP isomerase</shortName>
        <ecNumber evidence="1">5.3.3.2</ecNumber>
    </recommendedName>
    <alternativeName>
        <fullName evidence="1">IPP:DMAPP isomerase</fullName>
    </alternativeName>
    <alternativeName>
        <fullName evidence="1">Isopentenyl pyrophosphate isomerase</fullName>
    </alternativeName>
</protein>
<reference key="1">
    <citation type="submission" date="2006-12" db="EMBL/GenBank/DDBJ databases">
        <title>Complete sequence of Halorhodospira halophila SL1.</title>
        <authorList>
            <consortium name="US DOE Joint Genome Institute"/>
            <person name="Copeland A."/>
            <person name="Lucas S."/>
            <person name="Lapidus A."/>
            <person name="Barry K."/>
            <person name="Detter J.C."/>
            <person name="Glavina del Rio T."/>
            <person name="Hammon N."/>
            <person name="Israni S."/>
            <person name="Dalin E."/>
            <person name="Tice H."/>
            <person name="Pitluck S."/>
            <person name="Saunders E."/>
            <person name="Brettin T."/>
            <person name="Bruce D."/>
            <person name="Han C."/>
            <person name="Tapia R."/>
            <person name="Schmutz J."/>
            <person name="Larimer F."/>
            <person name="Land M."/>
            <person name="Hauser L."/>
            <person name="Kyrpides N."/>
            <person name="Mikhailova N."/>
            <person name="Hoff W."/>
            <person name="Richardson P."/>
        </authorList>
    </citation>
    <scope>NUCLEOTIDE SEQUENCE [LARGE SCALE GENOMIC DNA]</scope>
    <source>
        <strain>DSM 244 / SL1</strain>
    </source>
</reference>
<comment type="function">
    <text evidence="1">Catalyzes the 1,3-allylic rearrangement of the homoallylic substrate isopentenyl (IPP) to its highly electrophilic allylic isomer, dimethylallyl diphosphate (DMAPP).</text>
</comment>
<comment type="catalytic activity">
    <reaction evidence="1">
        <text>isopentenyl diphosphate = dimethylallyl diphosphate</text>
        <dbReference type="Rhea" id="RHEA:23284"/>
        <dbReference type="ChEBI" id="CHEBI:57623"/>
        <dbReference type="ChEBI" id="CHEBI:128769"/>
        <dbReference type="EC" id="5.3.3.2"/>
    </reaction>
</comment>
<comment type="cofactor">
    <cofactor evidence="1">
        <name>Mg(2+)</name>
        <dbReference type="ChEBI" id="CHEBI:18420"/>
    </cofactor>
    <text evidence="1">Binds 1 Mg(2+) ion per subunit. The magnesium ion binds only when substrate is bound.</text>
</comment>
<comment type="cofactor">
    <cofactor evidence="1">
        <name>Mn(2+)</name>
        <dbReference type="ChEBI" id="CHEBI:29035"/>
    </cofactor>
    <text evidence="1">Binds 1 Mn(2+) ion per subunit.</text>
</comment>
<comment type="pathway">
    <text evidence="1">Isoprenoid biosynthesis; dimethylallyl diphosphate biosynthesis; dimethylallyl diphosphate from isopentenyl diphosphate: step 1/1.</text>
</comment>
<comment type="subcellular location">
    <subcellularLocation>
        <location evidence="1">Cytoplasm</location>
    </subcellularLocation>
</comment>
<comment type="similarity">
    <text evidence="1">Belongs to the IPP isomerase type 1 family.</text>
</comment>
<feature type="chain" id="PRO_1000012171" description="Isopentenyl-diphosphate Delta-isomerase">
    <location>
        <begin position="1"/>
        <end position="175"/>
    </location>
</feature>
<feature type="domain" description="Nudix hydrolase">
    <location>
        <begin position="28"/>
        <end position="162"/>
    </location>
</feature>
<feature type="active site" evidence="1">
    <location>
        <position position="65"/>
    </location>
</feature>
<feature type="active site" evidence="1">
    <location>
        <position position="113"/>
    </location>
</feature>
<feature type="binding site" evidence="1">
    <location>
        <position position="23"/>
    </location>
    <ligand>
        <name>Mn(2+)</name>
        <dbReference type="ChEBI" id="CHEBI:29035"/>
    </ligand>
</feature>
<feature type="binding site" evidence="1">
    <location>
        <position position="30"/>
    </location>
    <ligand>
        <name>Mn(2+)</name>
        <dbReference type="ChEBI" id="CHEBI:29035"/>
    </ligand>
</feature>
<feature type="binding site" evidence="1">
    <location>
        <position position="67"/>
    </location>
    <ligand>
        <name>Mn(2+)</name>
        <dbReference type="ChEBI" id="CHEBI:29035"/>
    </ligand>
</feature>
<feature type="binding site" evidence="1">
    <location>
        <position position="85"/>
    </location>
    <ligand>
        <name>Mg(2+)</name>
        <dbReference type="ChEBI" id="CHEBI:18420"/>
    </ligand>
</feature>
<feature type="binding site" evidence="1">
    <location>
        <position position="111"/>
    </location>
    <ligand>
        <name>Mn(2+)</name>
        <dbReference type="ChEBI" id="CHEBI:29035"/>
    </ligand>
</feature>
<feature type="binding site" evidence="1">
    <location>
        <position position="113"/>
    </location>
    <ligand>
        <name>Mn(2+)</name>
        <dbReference type="ChEBI" id="CHEBI:29035"/>
    </ligand>
</feature>
<accession>A1WXH5</accession>
<keyword id="KW-0963">Cytoplasm</keyword>
<keyword id="KW-0413">Isomerase</keyword>
<keyword id="KW-0414">Isoprene biosynthesis</keyword>
<keyword id="KW-0460">Magnesium</keyword>
<keyword id="KW-0464">Manganese</keyword>
<keyword id="KW-0479">Metal-binding</keyword>
<keyword id="KW-1185">Reference proteome</keyword>